<dbReference type="EMBL" id="BA000001">
    <property type="protein sequence ID" value="BAA31105.1"/>
    <property type="molecule type" value="Genomic_DNA"/>
</dbReference>
<dbReference type="PIR" id="B71214">
    <property type="entry name" value="B71214"/>
</dbReference>
<dbReference type="RefSeq" id="WP_010886042.1">
    <property type="nucleotide sequence ID" value="NC_000961.1"/>
</dbReference>
<dbReference type="PDB" id="2DM9">
    <property type="method" value="X-ray"/>
    <property type="resolution" value="1.85 A"/>
    <property type="chains" value="A/B=1-198"/>
</dbReference>
<dbReference type="PDB" id="2DMA">
    <property type="method" value="X-ray"/>
    <property type="resolution" value="2.05 A"/>
    <property type="chains" value="A=1-198"/>
</dbReference>
<dbReference type="PDB" id="4DT0">
    <property type="method" value="X-ray"/>
    <property type="resolution" value="3.65 A"/>
    <property type="chains" value="A=2-198"/>
</dbReference>
<dbReference type="PDBsum" id="2DM9"/>
<dbReference type="PDBsum" id="2DMA"/>
<dbReference type="PDBsum" id="4DT0"/>
<dbReference type="SMR" id="O57724"/>
<dbReference type="STRING" id="70601.gene:9378991"/>
<dbReference type="EnsemblBacteria" id="BAA31105">
    <property type="protein sequence ID" value="BAA31105"/>
    <property type="gene ID" value="BAA31105"/>
</dbReference>
<dbReference type="GeneID" id="1442824"/>
<dbReference type="KEGG" id="pho:PH1978"/>
<dbReference type="eggNOG" id="arCOG00869">
    <property type="taxonomic scope" value="Archaea"/>
</dbReference>
<dbReference type="OrthoDB" id="4691at2157"/>
<dbReference type="BRENDA" id="7.1.2.2">
    <property type="organism ID" value="5244"/>
</dbReference>
<dbReference type="EvolutionaryTrace" id="O57724"/>
<dbReference type="Proteomes" id="UP000000752">
    <property type="component" value="Chromosome"/>
</dbReference>
<dbReference type="GO" id="GO:0005886">
    <property type="term" value="C:plasma membrane"/>
    <property type="evidence" value="ECO:0007669"/>
    <property type="project" value="UniProtKB-SubCell"/>
</dbReference>
<dbReference type="GO" id="GO:0033178">
    <property type="term" value="C:proton-transporting two-sector ATPase complex, catalytic domain"/>
    <property type="evidence" value="ECO:0007669"/>
    <property type="project" value="InterPro"/>
</dbReference>
<dbReference type="GO" id="GO:0005524">
    <property type="term" value="F:ATP binding"/>
    <property type="evidence" value="ECO:0007669"/>
    <property type="project" value="UniProtKB-UniRule"/>
</dbReference>
<dbReference type="GO" id="GO:0046933">
    <property type="term" value="F:proton-transporting ATP synthase activity, rotational mechanism"/>
    <property type="evidence" value="ECO:0007669"/>
    <property type="project" value="UniProtKB-UniRule"/>
</dbReference>
<dbReference type="GO" id="GO:0046961">
    <property type="term" value="F:proton-transporting ATPase activity, rotational mechanism"/>
    <property type="evidence" value="ECO:0007669"/>
    <property type="project" value="InterPro"/>
</dbReference>
<dbReference type="GO" id="GO:0042777">
    <property type="term" value="P:proton motive force-driven plasma membrane ATP synthesis"/>
    <property type="evidence" value="ECO:0007669"/>
    <property type="project" value="UniProtKB-UniRule"/>
</dbReference>
<dbReference type="Gene3D" id="3.30.2320.30">
    <property type="entry name" value="ATP synthase, E subunit, C-terminal"/>
    <property type="match status" value="1"/>
</dbReference>
<dbReference type="Gene3D" id="1.20.5.620">
    <property type="entry name" value="F1F0 ATP synthase subunit B, membrane domain"/>
    <property type="match status" value="1"/>
</dbReference>
<dbReference type="HAMAP" id="MF_00311">
    <property type="entry name" value="ATP_synth_E_arch"/>
    <property type="match status" value="1"/>
</dbReference>
<dbReference type="InterPro" id="IPR028987">
    <property type="entry name" value="ATP_synth_B-like_membr_sf"/>
</dbReference>
<dbReference type="InterPro" id="IPR038495">
    <property type="entry name" value="ATPase_E_C"/>
</dbReference>
<dbReference type="InterPro" id="IPR002842">
    <property type="entry name" value="ATPase_V1_Esu"/>
</dbReference>
<dbReference type="NCBIfam" id="NF003049">
    <property type="entry name" value="PRK03963.1"/>
    <property type="match status" value="1"/>
</dbReference>
<dbReference type="PANTHER" id="PTHR45715">
    <property type="entry name" value="ATPASE H+-TRANSPORTING V1 SUBUNIT E1A-RELATED"/>
    <property type="match status" value="1"/>
</dbReference>
<dbReference type="Pfam" id="PF01991">
    <property type="entry name" value="vATP-synt_E"/>
    <property type="match status" value="1"/>
</dbReference>
<dbReference type="SUPFAM" id="SSF81573">
    <property type="entry name" value="F1F0 ATP synthase subunit B, membrane domain"/>
    <property type="match status" value="1"/>
</dbReference>
<dbReference type="SUPFAM" id="SSF160527">
    <property type="entry name" value="V-type ATPase subunit E-like"/>
    <property type="match status" value="1"/>
</dbReference>
<feature type="chain" id="PRO_0000117322" description="A-type ATP synthase subunit E">
    <location>
        <begin position="1"/>
        <end position="198"/>
    </location>
</feature>
<feature type="helix" evidence="2">
    <location>
        <begin position="82"/>
        <end position="96"/>
    </location>
</feature>
<feature type="helix" evidence="2">
    <location>
        <begin position="99"/>
        <end position="117"/>
    </location>
</feature>
<feature type="strand" evidence="2">
    <location>
        <begin position="120"/>
        <end position="125"/>
    </location>
</feature>
<feature type="helix" evidence="2">
    <location>
        <begin position="128"/>
        <end position="136"/>
    </location>
</feature>
<feature type="helix" evidence="2">
    <location>
        <begin position="138"/>
        <end position="144"/>
    </location>
</feature>
<feature type="strand" evidence="2">
    <location>
        <begin position="149"/>
        <end position="152"/>
    </location>
</feature>
<feature type="strand" evidence="2">
    <location>
        <begin position="159"/>
        <end position="166"/>
    </location>
</feature>
<feature type="strand" evidence="2">
    <location>
        <begin position="172"/>
        <end position="176"/>
    </location>
</feature>
<feature type="helix" evidence="2">
    <location>
        <begin position="177"/>
        <end position="183"/>
    </location>
</feature>
<feature type="helix" evidence="2">
    <location>
        <begin position="185"/>
        <end position="197"/>
    </location>
</feature>
<protein>
    <recommendedName>
        <fullName evidence="1">A-type ATP synthase subunit E</fullName>
    </recommendedName>
</protein>
<proteinExistence type="evidence at protein level"/>
<name>AATE_PYRHO</name>
<sequence>MNGAELIIQEINKEAERKIEYILNEARQQAEKIKEEARRNAEAKAEWIIRRAKTQAELEKQRIIANARLEVRRKRLAIQEEIISSVLEEVKRRLETMSEDEYFESVKALLKEAIKELNEKKVRVMSNEKTLGLIASRIEEIKSELGDVSIELGETVDTMGGVIVETEDGRIRIDNTFEARMERFEGEIRSTIAKVLFG</sequence>
<gene>
    <name evidence="1" type="primary">atpE</name>
    <name type="ordered locus">PH1978</name>
</gene>
<organism>
    <name type="scientific">Pyrococcus horikoshii (strain ATCC 700860 / DSM 12428 / JCM 9974 / NBRC 100139 / OT-3)</name>
    <dbReference type="NCBI Taxonomy" id="70601"/>
    <lineage>
        <taxon>Archaea</taxon>
        <taxon>Methanobacteriati</taxon>
        <taxon>Methanobacteriota</taxon>
        <taxon>Thermococci</taxon>
        <taxon>Thermococcales</taxon>
        <taxon>Thermococcaceae</taxon>
        <taxon>Pyrococcus</taxon>
    </lineage>
</organism>
<accession>O57724</accession>
<evidence type="ECO:0000255" key="1">
    <source>
        <dbReference type="HAMAP-Rule" id="MF_00311"/>
    </source>
</evidence>
<evidence type="ECO:0007829" key="2">
    <source>
        <dbReference type="PDB" id="2DM9"/>
    </source>
</evidence>
<keyword id="KW-0002">3D-structure</keyword>
<keyword id="KW-0066">ATP synthesis</keyword>
<keyword id="KW-1003">Cell membrane</keyword>
<keyword id="KW-0375">Hydrogen ion transport</keyword>
<keyword id="KW-0406">Ion transport</keyword>
<keyword id="KW-0472">Membrane</keyword>
<keyword id="KW-0813">Transport</keyword>
<reference key="1">
    <citation type="journal article" date="1998" name="DNA Res.">
        <title>Complete sequence and gene organization of the genome of a hyper-thermophilic archaebacterium, Pyrococcus horikoshii OT3.</title>
        <authorList>
            <person name="Kawarabayasi Y."/>
            <person name="Sawada M."/>
            <person name="Horikawa H."/>
            <person name="Haikawa Y."/>
            <person name="Hino Y."/>
            <person name="Yamamoto S."/>
            <person name="Sekine M."/>
            <person name="Baba S."/>
            <person name="Kosugi H."/>
            <person name="Hosoyama A."/>
            <person name="Nagai Y."/>
            <person name="Sakai M."/>
            <person name="Ogura K."/>
            <person name="Otsuka R."/>
            <person name="Nakazawa H."/>
            <person name="Takamiya M."/>
            <person name="Ohfuku Y."/>
            <person name="Funahashi T."/>
            <person name="Tanaka T."/>
            <person name="Kudoh Y."/>
            <person name="Yamazaki J."/>
            <person name="Kushida N."/>
            <person name="Oguchi A."/>
            <person name="Aoki K."/>
            <person name="Yoshizawa T."/>
            <person name="Nakamura Y."/>
            <person name="Robb F.T."/>
            <person name="Horikoshi K."/>
            <person name="Masuchi Y."/>
            <person name="Shizuya H."/>
            <person name="Kikuchi H."/>
        </authorList>
    </citation>
    <scope>NUCLEOTIDE SEQUENCE [LARGE SCALE GENOMIC DNA]</scope>
    <source>
        <strain>ATCC 700860 / DSM 12428 / JCM 9974 / NBRC 100139 / OT-3</strain>
    </source>
</reference>
<comment type="function">
    <text evidence="1">Component of the A-type ATP synthase that produces ATP from ADP in the presence of a proton gradient across the membrane.</text>
</comment>
<comment type="subunit">
    <text evidence="1">Has multiple subunits with at least A(3), B(3), C, D, E, F, H, I and proteolipid K(x).</text>
</comment>
<comment type="subcellular location">
    <subcellularLocation>
        <location evidence="1">Cell membrane</location>
        <topology evidence="1">Peripheral membrane protein</topology>
    </subcellularLocation>
</comment>
<comment type="similarity">
    <text evidence="1">Belongs to the V-ATPase E subunit family.</text>
</comment>